<accession>Q47Z09</accession>
<reference key="1">
    <citation type="journal article" date="2005" name="Proc. Natl. Acad. Sci. U.S.A.">
        <title>The psychrophilic lifestyle as revealed by the genome sequence of Colwellia psychrerythraea 34H through genomic and proteomic analyses.</title>
        <authorList>
            <person name="Methe B.A."/>
            <person name="Nelson K.E."/>
            <person name="Deming J.W."/>
            <person name="Momen B."/>
            <person name="Melamud E."/>
            <person name="Zhang X."/>
            <person name="Moult J."/>
            <person name="Madupu R."/>
            <person name="Nelson W.C."/>
            <person name="Dodson R.J."/>
            <person name="Brinkac L.M."/>
            <person name="Daugherty S.C."/>
            <person name="Durkin A.S."/>
            <person name="DeBoy R.T."/>
            <person name="Kolonay J.F."/>
            <person name="Sullivan S.A."/>
            <person name="Zhou L."/>
            <person name="Davidsen T.M."/>
            <person name="Wu M."/>
            <person name="Huston A.L."/>
            <person name="Lewis M."/>
            <person name="Weaver B."/>
            <person name="Weidman J.F."/>
            <person name="Khouri H."/>
            <person name="Utterback T.R."/>
            <person name="Feldblyum T.V."/>
            <person name="Fraser C.M."/>
        </authorList>
    </citation>
    <scope>NUCLEOTIDE SEQUENCE [LARGE SCALE GENOMIC DNA]</scope>
    <source>
        <strain>34H / ATCC BAA-681</strain>
    </source>
</reference>
<comment type="function">
    <text evidence="1">Specifically methylates the guanine in position 2445 (m2G2445) and the guanine in position 2069 (m7G2069) of 23S rRNA.</text>
</comment>
<comment type="catalytic activity">
    <reaction evidence="1">
        <text>guanosine(2445) in 23S rRNA + S-adenosyl-L-methionine = N(2)-methylguanosine(2445) in 23S rRNA + S-adenosyl-L-homocysteine + H(+)</text>
        <dbReference type="Rhea" id="RHEA:42740"/>
        <dbReference type="Rhea" id="RHEA-COMP:10215"/>
        <dbReference type="Rhea" id="RHEA-COMP:10216"/>
        <dbReference type="ChEBI" id="CHEBI:15378"/>
        <dbReference type="ChEBI" id="CHEBI:57856"/>
        <dbReference type="ChEBI" id="CHEBI:59789"/>
        <dbReference type="ChEBI" id="CHEBI:74269"/>
        <dbReference type="ChEBI" id="CHEBI:74481"/>
        <dbReference type="EC" id="2.1.1.173"/>
    </reaction>
</comment>
<comment type="catalytic activity">
    <reaction evidence="1">
        <text>guanosine(2069) in 23S rRNA + S-adenosyl-L-methionine = N(2)-methylguanosine(2069) in 23S rRNA + S-adenosyl-L-homocysteine + H(+)</text>
        <dbReference type="Rhea" id="RHEA:43772"/>
        <dbReference type="Rhea" id="RHEA-COMP:10688"/>
        <dbReference type="Rhea" id="RHEA-COMP:10689"/>
        <dbReference type="ChEBI" id="CHEBI:15378"/>
        <dbReference type="ChEBI" id="CHEBI:57856"/>
        <dbReference type="ChEBI" id="CHEBI:59789"/>
        <dbReference type="ChEBI" id="CHEBI:74269"/>
        <dbReference type="ChEBI" id="CHEBI:74481"/>
        <dbReference type="EC" id="2.1.1.264"/>
    </reaction>
</comment>
<comment type="subcellular location">
    <subcellularLocation>
        <location evidence="1">Cytoplasm</location>
    </subcellularLocation>
</comment>
<comment type="similarity">
    <text evidence="1">Belongs to the methyltransferase superfamily. RlmKL family.</text>
</comment>
<protein>
    <recommendedName>
        <fullName evidence="1">Ribosomal RNA large subunit methyltransferase K/L</fullName>
    </recommendedName>
    <domain>
        <recommendedName>
            <fullName evidence="1">23S rRNA m2G2445 methyltransferase</fullName>
            <ecNumber evidence="1">2.1.1.173</ecNumber>
        </recommendedName>
        <alternativeName>
            <fullName evidence="1">rRNA (guanine-N(2)-)-methyltransferase RlmL</fullName>
        </alternativeName>
    </domain>
    <domain>
        <recommendedName>
            <fullName evidence="1">23S rRNA m7G2069 methyltransferase</fullName>
            <ecNumber evidence="1">2.1.1.264</ecNumber>
        </recommendedName>
        <alternativeName>
            <fullName evidence="1">rRNA (guanine-N(7)-)-methyltransferase RlmK</fullName>
        </alternativeName>
    </domain>
</protein>
<sequence>MKESTQQFLALTSPGIEVLLFDEIKSLGAFNVIQKPEGVYFQASLALGYKISLWTRLATRIMLKLGEGEAKDKDELFKAASSINWPDIFKSTTTFAVDFVGYSEEIRNSQFGGLTIKDAIVDQFRDQGFERPNVDKKAPQISFQARLLRDNVTIFLDFSGRGLFQRGYREHSGAAPLKENLAAALIIRSGWLNDTSKPLVDPMCGSGTILIEAVSMAAKQAPAINRQSWGFEAWLSHDNAVWQKQLTLAIDSSEENMSNLKVKVFGIDIDERVLRTAQQNARNAQLHQYIEFTCKNTNDMDNTFGQPGTILFNPPYGERIGELPELVENFVLFGQKLKMQFKDWRIAILTANVDLLSMLKLSSFKRYKFKNGPLDCQLALYNLDAKQGAKDAINPQSDFAEEDSAFANRLKKNRKNLKGWLKSNEIEAYRLYDGDIPEYNVAIDIYGEYLVIQEYAAPKTIEEDKAKKRLQEVIYWAPKVLNIPTDKVILKTRAKQRGANQYERLEKTKQSLTINEHGALFKINLWDYLDTGLFLDHRKTRQIVAKKSQGKSLLNLFAYTGSVSVQAAVQGAASITTVDMSNTYLNWAEDNFALNKLNGHKYQFIQADCLDWLKKNVNKFDVIFIDPPTFSNSKRMEDSFDVQRDHVDLITDALKSLNRGGEIFFTNNKRNFKIDFEALDELGLTAEAMSDVTRDKDFARNKHIHNSWSIKRTAT</sequence>
<organism>
    <name type="scientific">Colwellia psychrerythraea (strain 34H / ATCC BAA-681)</name>
    <name type="common">Vibrio psychroerythus</name>
    <dbReference type="NCBI Taxonomy" id="167879"/>
    <lineage>
        <taxon>Bacteria</taxon>
        <taxon>Pseudomonadati</taxon>
        <taxon>Pseudomonadota</taxon>
        <taxon>Gammaproteobacteria</taxon>
        <taxon>Alteromonadales</taxon>
        <taxon>Colwelliaceae</taxon>
        <taxon>Colwellia</taxon>
    </lineage>
</organism>
<evidence type="ECO:0000255" key="1">
    <source>
        <dbReference type="HAMAP-Rule" id="MF_01858"/>
    </source>
</evidence>
<name>RLMKL_COLP3</name>
<keyword id="KW-0963">Cytoplasm</keyword>
<keyword id="KW-0489">Methyltransferase</keyword>
<keyword id="KW-0694">RNA-binding</keyword>
<keyword id="KW-0698">rRNA processing</keyword>
<keyword id="KW-0949">S-adenosyl-L-methionine</keyword>
<keyword id="KW-0808">Transferase</keyword>
<dbReference type="EC" id="2.1.1.173" evidence="1"/>
<dbReference type="EC" id="2.1.1.264" evidence="1"/>
<dbReference type="EMBL" id="CP000083">
    <property type="protein sequence ID" value="AAZ24957.1"/>
    <property type="molecule type" value="Genomic_DNA"/>
</dbReference>
<dbReference type="RefSeq" id="WP_011044048.1">
    <property type="nucleotide sequence ID" value="NC_003910.7"/>
</dbReference>
<dbReference type="SMR" id="Q47Z09"/>
<dbReference type="STRING" id="167879.CPS_3279"/>
<dbReference type="KEGG" id="cps:CPS_3279"/>
<dbReference type="eggNOG" id="COG0116">
    <property type="taxonomic scope" value="Bacteria"/>
</dbReference>
<dbReference type="eggNOG" id="COG1092">
    <property type="taxonomic scope" value="Bacteria"/>
</dbReference>
<dbReference type="HOGENOM" id="CLU_014042_2_0_6"/>
<dbReference type="Proteomes" id="UP000000547">
    <property type="component" value="Chromosome"/>
</dbReference>
<dbReference type="GO" id="GO:0005737">
    <property type="term" value="C:cytoplasm"/>
    <property type="evidence" value="ECO:0007669"/>
    <property type="project" value="UniProtKB-SubCell"/>
</dbReference>
<dbReference type="GO" id="GO:0052915">
    <property type="term" value="F:23S rRNA (guanine(2445)-N(2))-methyltransferase activity"/>
    <property type="evidence" value="ECO:0007669"/>
    <property type="project" value="UniProtKB-UniRule"/>
</dbReference>
<dbReference type="GO" id="GO:0003723">
    <property type="term" value="F:RNA binding"/>
    <property type="evidence" value="ECO:0007669"/>
    <property type="project" value="UniProtKB-KW"/>
</dbReference>
<dbReference type="GO" id="GO:0070043">
    <property type="term" value="F:rRNA (guanine-N7-)-methyltransferase activity"/>
    <property type="evidence" value="ECO:0007669"/>
    <property type="project" value="UniProtKB-UniRule"/>
</dbReference>
<dbReference type="CDD" id="cd02440">
    <property type="entry name" value="AdoMet_MTases"/>
    <property type="match status" value="1"/>
</dbReference>
<dbReference type="CDD" id="cd11715">
    <property type="entry name" value="THUMP_AdoMetMT"/>
    <property type="match status" value="1"/>
</dbReference>
<dbReference type="Gene3D" id="3.30.2130.30">
    <property type="match status" value="1"/>
</dbReference>
<dbReference type="Gene3D" id="3.30.750.80">
    <property type="entry name" value="RNA methyltransferase domain (HRMD) like"/>
    <property type="match status" value="1"/>
</dbReference>
<dbReference type="Gene3D" id="3.40.50.150">
    <property type="entry name" value="Vaccinia Virus protein VP39"/>
    <property type="match status" value="2"/>
</dbReference>
<dbReference type="HAMAP" id="MF_01858">
    <property type="entry name" value="23SrRNA_methyltr_KL"/>
    <property type="match status" value="1"/>
</dbReference>
<dbReference type="InterPro" id="IPR017244">
    <property type="entry name" value="23SrRNA_methyltr_KL"/>
</dbReference>
<dbReference type="InterPro" id="IPR000241">
    <property type="entry name" value="RlmKL-like_Mtase"/>
</dbReference>
<dbReference type="InterPro" id="IPR053943">
    <property type="entry name" value="RlmKL-like_Mtase_CS"/>
</dbReference>
<dbReference type="InterPro" id="IPR054170">
    <property type="entry name" value="RlmL_1st"/>
</dbReference>
<dbReference type="InterPro" id="IPR019614">
    <property type="entry name" value="SAM-dep_methyl-trfase"/>
</dbReference>
<dbReference type="InterPro" id="IPR029063">
    <property type="entry name" value="SAM-dependent_MTases_sf"/>
</dbReference>
<dbReference type="InterPro" id="IPR004114">
    <property type="entry name" value="THUMP_dom"/>
</dbReference>
<dbReference type="NCBIfam" id="NF008748">
    <property type="entry name" value="PRK11783.1"/>
    <property type="match status" value="1"/>
</dbReference>
<dbReference type="PANTHER" id="PTHR47313">
    <property type="entry name" value="RIBOSOMAL RNA LARGE SUBUNIT METHYLTRANSFERASE K/L"/>
    <property type="match status" value="1"/>
</dbReference>
<dbReference type="PANTHER" id="PTHR47313:SF1">
    <property type="entry name" value="RIBOSOMAL RNA LARGE SUBUNIT METHYLTRANSFERASE K_L"/>
    <property type="match status" value="1"/>
</dbReference>
<dbReference type="Pfam" id="PF10672">
    <property type="entry name" value="Methyltrans_SAM"/>
    <property type="match status" value="1"/>
</dbReference>
<dbReference type="Pfam" id="PF22020">
    <property type="entry name" value="RlmL_1st"/>
    <property type="match status" value="1"/>
</dbReference>
<dbReference type="Pfam" id="PF02926">
    <property type="entry name" value="THUMP"/>
    <property type="match status" value="1"/>
</dbReference>
<dbReference type="Pfam" id="PF01170">
    <property type="entry name" value="UPF0020"/>
    <property type="match status" value="1"/>
</dbReference>
<dbReference type="PIRSF" id="PIRSF037618">
    <property type="entry name" value="RNA_Mtase_bacteria_prd"/>
    <property type="match status" value="1"/>
</dbReference>
<dbReference type="SMART" id="SM00981">
    <property type="entry name" value="THUMP"/>
    <property type="match status" value="1"/>
</dbReference>
<dbReference type="SUPFAM" id="SSF53335">
    <property type="entry name" value="S-adenosyl-L-methionine-dependent methyltransferases"/>
    <property type="match status" value="2"/>
</dbReference>
<dbReference type="PROSITE" id="PS51165">
    <property type="entry name" value="THUMP"/>
    <property type="match status" value="1"/>
</dbReference>
<dbReference type="PROSITE" id="PS01261">
    <property type="entry name" value="UPF0020"/>
    <property type="match status" value="1"/>
</dbReference>
<proteinExistence type="inferred from homology"/>
<feature type="chain" id="PRO_0000366732" description="Ribosomal RNA large subunit methyltransferase K/L">
    <location>
        <begin position="1"/>
        <end position="715"/>
    </location>
</feature>
<feature type="domain" description="THUMP" evidence="1">
    <location>
        <begin position="47"/>
        <end position="158"/>
    </location>
</feature>
<gene>
    <name evidence="1" type="primary">rlmL</name>
    <name type="ordered locus">CPS_3279</name>
</gene>